<keyword id="KW-0102">Bromination</keyword>
<keyword id="KW-1015">Disulfide bond</keyword>
<keyword id="KW-0379">Hydroxylation</keyword>
<keyword id="KW-0872">Ion channel impairing toxin</keyword>
<keyword id="KW-0528">Neurotoxin</keyword>
<keyword id="KW-0964">Secreted</keyword>
<keyword id="KW-0800">Toxin</keyword>
<accession>A6YR30</accession>
<protein>
    <recommendedName>
        <fullName>Mu-conotoxin-like Cal 12.1.2c</fullName>
    </recommendedName>
    <alternativeName>
        <fullName>Conotoxin CalTx 12.1.2D</fullName>
    </alternativeName>
</protein>
<comment type="function">
    <text evidence="1">Mu-conotoxins block voltage-gated sodium channels. This toxin reversibly blocks voltage-gated sodium channel in cephalopods, with no alteration in the voltage dependence of sodium conductance or on the kinetics of inactivation (By similarity).</text>
</comment>
<comment type="subcellular location">
    <subcellularLocation>
        <location evidence="1">Secreted</location>
    </subcellularLocation>
</comment>
<comment type="tissue specificity">
    <text>Expressed by the venom duct.</text>
</comment>
<comment type="domain">
    <text>The cysteine framework is XII (C-C-C-C-CC-C-C).</text>
</comment>
<name>COC2C_CONCL</name>
<sequence>DVCDSLVGGRCIHNGCYCERDAPNGNCCNTDGCTARWWCPGTKWD</sequence>
<feature type="peptide" id="PRO_0000392271" description="Mu-conotoxin-like Cal 12.1.2c">
    <location>
        <begin position="1"/>
        <end position="45"/>
    </location>
</feature>
<feature type="modified residue" description="4-hydroxyproline" evidence="1">
    <location>
        <position position="23"/>
    </location>
</feature>
<feature type="modified residue" description="6'-bromotryptophan" evidence="1">
    <location>
        <position position="37"/>
    </location>
</feature>
<feature type="modified residue" description="6'-bromotryptophan" evidence="1">
    <location>
        <position position="38"/>
    </location>
</feature>
<feature type="modified residue" description="4-hydroxyproline" evidence="1">
    <location>
        <position position="40"/>
    </location>
</feature>
<feature type="modified residue" description="6'-bromotryptophan" evidence="1">
    <location>
        <position position="44"/>
    </location>
</feature>
<feature type="disulfide bond" evidence="2">
    <location>
        <begin position="3"/>
        <end position="16"/>
    </location>
</feature>
<feature type="disulfide bond" evidence="1">
    <location>
        <begin position="11"/>
        <end position="28"/>
    </location>
</feature>
<feature type="disulfide bond" evidence="1">
    <location>
        <begin position="18"/>
        <end position="33"/>
    </location>
</feature>
<feature type="disulfide bond" evidence="1">
    <location>
        <begin position="27"/>
        <end position="39"/>
    </location>
</feature>
<reference key="1">
    <citation type="journal article" date="2011" name="J. Exp. Biol.">
        <title>A diverse family of novel peptide toxins from an unusual cone snail, Conus californicus.</title>
        <authorList>
            <person name="Gilly W.F."/>
            <person name="Richmond T.A."/>
            <person name="Duda T.F. Jr."/>
            <person name="Elliger C."/>
            <person name="Lebaric Z."/>
            <person name="Schulz J."/>
            <person name="Bingham J.P."/>
            <person name="Sweedler J.V."/>
        </authorList>
    </citation>
    <scope>NUCLEOTIDE SEQUENCE [MRNA]</scope>
    <source>
        <tissue>Venom duct</tissue>
    </source>
</reference>
<organism>
    <name type="scientific">Californiconus californicus</name>
    <name type="common">California cone</name>
    <name type="synonym">Conus californicus</name>
    <dbReference type="NCBI Taxonomy" id="1736779"/>
    <lineage>
        <taxon>Eukaryota</taxon>
        <taxon>Metazoa</taxon>
        <taxon>Spiralia</taxon>
        <taxon>Lophotrochozoa</taxon>
        <taxon>Mollusca</taxon>
        <taxon>Gastropoda</taxon>
        <taxon>Caenogastropoda</taxon>
        <taxon>Neogastropoda</taxon>
        <taxon>Conoidea</taxon>
        <taxon>Conidae</taxon>
        <taxon>Californiconus</taxon>
    </lineage>
</organism>
<evidence type="ECO:0000250" key="1"/>
<evidence type="ECO:0000305" key="2"/>
<dbReference type="EMBL" id="EF644184">
    <property type="protein sequence ID" value="ABR92954.1"/>
    <property type="molecule type" value="mRNA"/>
</dbReference>
<dbReference type="ConoServer" id="803">
    <property type="toxin name" value="Cal12.1.2c"/>
</dbReference>
<dbReference type="GO" id="GO:0005576">
    <property type="term" value="C:extracellular region"/>
    <property type="evidence" value="ECO:0007669"/>
    <property type="project" value="UniProtKB-SubCell"/>
</dbReference>
<dbReference type="GO" id="GO:0099106">
    <property type="term" value="F:ion channel regulator activity"/>
    <property type="evidence" value="ECO:0007669"/>
    <property type="project" value="UniProtKB-KW"/>
</dbReference>
<dbReference type="GO" id="GO:0090729">
    <property type="term" value="F:toxin activity"/>
    <property type="evidence" value="ECO:0007669"/>
    <property type="project" value="UniProtKB-KW"/>
</dbReference>
<proteinExistence type="evidence at transcript level"/>